<keyword id="KW-0025">Alternative splicing</keyword>
<keyword id="KW-0149">Chlorophyll biosynthesis</keyword>
<keyword id="KW-0150">Chloroplast</keyword>
<keyword id="KW-0472">Membrane</keyword>
<keyword id="KW-0489">Methyltransferase</keyword>
<keyword id="KW-0934">Plastid</keyword>
<keyword id="KW-1185">Reference proteome</keyword>
<keyword id="KW-0949">S-adenosyl-L-methionine</keyword>
<keyword id="KW-0793">Thylakoid</keyword>
<keyword id="KW-0808">Transferase</keyword>
<keyword id="KW-0809">Transit peptide</keyword>
<name>CHLM_ARATH</name>
<evidence type="ECO:0000255" key="1"/>
<evidence type="ECO:0000255" key="2">
    <source>
        <dbReference type="PROSITE-ProRule" id="PRU00889"/>
    </source>
</evidence>
<evidence type="ECO:0000269" key="3">
    <source>
    </source>
</evidence>
<evidence type="ECO:0000269" key="4">
    <source>
    </source>
</evidence>
<evidence type="ECO:0000269" key="5">
    <source>
    </source>
</evidence>
<evidence type="ECO:0000269" key="6">
    <source>
    </source>
</evidence>
<evidence type="ECO:0000269" key="7">
    <source>
    </source>
</evidence>
<evidence type="ECO:0000303" key="8">
    <source>
    </source>
</evidence>
<evidence type="ECO:0000305" key="9"/>
<dbReference type="EC" id="2.1.1.11"/>
<dbReference type="EMBL" id="AL035523">
    <property type="protein sequence ID" value="CAB36750.1"/>
    <property type="molecule type" value="Genomic_DNA"/>
</dbReference>
<dbReference type="EMBL" id="AL161562">
    <property type="protein sequence ID" value="CAB79417.1"/>
    <property type="molecule type" value="Genomic_DNA"/>
</dbReference>
<dbReference type="EMBL" id="CP002687">
    <property type="protein sequence ID" value="AEE85000.1"/>
    <property type="molecule type" value="Genomic_DNA"/>
</dbReference>
<dbReference type="EMBL" id="CP002687">
    <property type="protein sequence ID" value="AEE85001.1"/>
    <property type="molecule type" value="Genomic_DNA"/>
</dbReference>
<dbReference type="EMBL" id="CP002687">
    <property type="protein sequence ID" value="AEE85002.1"/>
    <property type="molecule type" value="Genomic_DNA"/>
</dbReference>
<dbReference type="EMBL" id="CP002687">
    <property type="protein sequence ID" value="AEE85003.1"/>
    <property type="molecule type" value="Genomic_DNA"/>
</dbReference>
<dbReference type="EMBL" id="CP002687">
    <property type="protein sequence ID" value="AEE85004.1"/>
    <property type="molecule type" value="Genomic_DNA"/>
</dbReference>
<dbReference type="EMBL" id="AY034948">
    <property type="protein sequence ID" value="AAK59454.1"/>
    <property type="molecule type" value="mRNA"/>
</dbReference>
<dbReference type="EMBL" id="AY062991">
    <property type="protein sequence ID" value="AAL34165.1"/>
    <property type="molecule type" value="mRNA"/>
</dbReference>
<dbReference type="EMBL" id="AK316688">
    <property type="protein sequence ID" value="BAH19415.1"/>
    <property type="molecule type" value="mRNA"/>
</dbReference>
<dbReference type="EMBL" id="AK316669">
    <property type="protein sequence ID" value="BAH19398.1"/>
    <property type="molecule type" value="mRNA"/>
</dbReference>
<dbReference type="EMBL" id="AK319071">
    <property type="protein sequence ID" value="BAH57186.1"/>
    <property type="molecule type" value="mRNA"/>
</dbReference>
<dbReference type="PIR" id="T05529">
    <property type="entry name" value="T05529"/>
</dbReference>
<dbReference type="RefSeq" id="NP_001119052.1">
    <molecule id="Q9SW18-2"/>
    <property type="nucleotide sequence ID" value="NM_001125580.1"/>
</dbReference>
<dbReference type="RefSeq" id="NP_001190832.1">
    <molecule id="Q9SW18-1"/>
    <property type="nucleotide sequence ID" value="NM_001203903.1"/>
</dbReference>
<dbReference type="RefSeq" id="NP_194238.1">
    <molecule id="Q9SW18-1"/>
    <property type="nucleotide sequence ID" value="NM_118640.3"/>
</dbReference>
<dbReference type="RefSeq" id="NP_849438.1">
    <molecule id="Q9SW18-1"/>
    <property type="nucleotide sequence ID" value="NM_179107.2"/>
</dbReference>
<dbReference type="RefSeq" id="NP_849439.1">
    <molecule id="Q9SW18-1"/>
    <property type="nucleotide sequence ID" value="NM_179108.3"/>
</dbReference>
<dbReference type="SMR" id="Q9SW18"/>
<dbReference type="BioGRID" id="13898">
    <property type="interactions" value="2"/>
</dbReference>
<dbReference type="FunCoup" id="Q9SW18">
    <property type="interactions" value="1134"/>
</dbReference>
<dbReference type="STRING" id="3702.Q9SW18"/>
<dbReference type="GlyGen" id="Q9SW18">
    <property type="glycosylation" value="1 site"/>
</dbReference>
<dbReference type="iPTMnet" id="Q9SW18"/>
<dbReference type="PaxDb" id="3702-AT4G25080.5"/>
<dbReference type="ProteomicsDB" id="245178">
    <molecule id="Q9SW18-1"/>
</dbReference>
<dbReference type="EnsemblPlants" id="AT4G25080.1">
    <molecule id="Q9SW18-1"/>
    <property type="protein sequence ID" value="AT4G25080.1"/>
    <property type="gene ID" value="AT4G25080"/>
</dbReference>
<dbReference type="EnsemblPlants" id="AT4G25080.2">
    <molecule id="Q9SW18-1"/>
    <property type="protein sequence ID" value="AT4G25080.2"/>
    <property type="gene ID" value="AT4G25080"/>
</dbReference>
<dbReference type="EnsemblPlants" id="AT4G25080.3">
    <molecule id="Q9SW18-1"/>
    <property type="protein sequence ID" value="AT4G25080.3"/>
    <property type="gene ID" value="AT4G25080"/>
</dbReference>
<dbReference type="EnsemblPlants" id="AT4G25080.4">
    <molecule id="Q9SW18-2"/>
    <property type="protein sequence ID" value="AT4G25080.4"/>
    <property type="gene ID" value="AT4G25080"/>
</dbReference>
<dbReference type="EnsemblPlants" id="AT4G25080.5">
    <molecule id="Q9SW18-1"/>
    <property type="protein sequence ID" value="AT4G25080.5"/>
    <property type="gene ID" value="AT4G25080"/>
</dbReference>
<dbReference type="GeneID" id="828611"/>
<dbReference type="Gramene" id="AT4G25080.1">
    <molecule id="Q9SW18-1"/>
    <property type="protein sequence ID" value="AT4G25080.1"/>
    <property type="gene ID" value="AT4G25080"/>
</dbReference>
<dbReference type="Gramene" id="AT4G25080.2">
    <molecule id="Q9SW18-1"/>
    <property type="protein sequence ID" value="AT4G25080.2"/>
    <property type="gene ID" value="AT4G25080"/>
</dbReference>
<dbReference type="Gramene" id="AT4G25080.3">
    <molecule id="Q9SW18-1"/>
    <property type="protein sequence ID" value="AT4G25080.3"/>
    <property type="gene ID" value="AT4G25080"/>
</dbReference>
<dbReference type="Gramene" id="AT4G25080.4">
    <molecule id="Q9SW18-2"/>
    <property type="protein sequence ID" value="AT4G25080.4"/>
    <property type="gene ID" value="AT4G25080"/>
</dbReference>
<dbReference type="Gramene" id="AT4G25080.5">
    <molecule id="Q9SW18-1"/>
    <property type="protein sequence ID" value="AT4G25080.5"/>
    <property type="gene ID" value="AT4G25080"/>
</dbReference>
<dbReference type="KEGG" id="ath:AT4G25080"/>
<dbReference type="Araport" id="AT4G25080"/>
<dbReference type="TAIR" id="AT4G25080">
    <property type="gene designation" value="CHLM"/>
</dbReference>
<dbReference type="eggNOG" id="KOG1270">
    <property type="taxonomic scope" value="Eukaryota"/>
</dbReference>
<dbReference type="HOGENOM" id="CLU_066342_0_0_1"/>
<dbReference type="InParanoid" id="Q9SW18"/>
<dbReference type="OrthoDB" id="66144at2759"/>
<dbReference type="PhylomeDB" id="Q9SW18"/>
<dbReference type="BioCyc" id="ARA:AT4G25080-MONOMER"/>
<dbReference type="BioCyc" id="MetaCyc:AT4G25080-MONOMER"/>
<dbReference type="BRENDA" id="2.1.1.11">
    <property type="organism ID" value="399"/>
</dbReference>
<dbReference type="UniPathway" id="UPA00668"/>
<dbReference type="PRO" id="PR:Q9SW18"/>
<dbReference type="Proteomes" id="UP000006548">
    <property type="component" value="Chromosome 4"/>
</dbReference>
<dbReference type="ExpressionAtlas" id="Q9SW18">
    <property type="expression patterns" value="baseline and differential"/>
</dbReference>
<dbReference type="GO" id="GO:0009507">
    <property type="term" value="C:chloroplast"/>
    <property type="evidence" value="ECO:0007005"/>
    <property type="project" value="TAIR"/>
</dbReference>
<dbReference type="GO" id="GO:0009941">
    <property type="term" value="C:chloroplast envelope"/>
    <property type="evidence" value="ECO:0007005"/>
    <property type="project" value="TAIR"/>
</dbReference>
<dbReference type="GO" id="GO:0031969">
    <property type="term" value="C:chloroplast membrane"/>
    <property type="evidence" value="ECO:0007669"/>
    <property type="project" value="UniProtKB-SubCell"/>
</dbReference>
<dbReference type="GO" id="GO:0009534">
    <property type="term" value="C:chloroplast thylakoid"/>
    <property type="evidence" value="ECO:0007005"/>
    <property type="project" value="TAIR"/>
</dbReference>
<dbReference type="GO" id="GO:0009535">
    <property type="term" value="C:chloroplast thylakoid membrane"/>
    <property type="evidence" value="ECO:0007669"/>
    <property type="project" value="UniProtKB-SubCell"/>
</dbReference>
<dbReference type="GO" id="GO:0005829">
    <property type="term" value="C:cytosol"/>
    <property type="evidence" value="ECO:0007005"/>
    <property type="project" value="TAIR"/>
</dbReference>
<dbReference type="GO" id="GO:0046406">
    <property type="term" value="F:magnesium protoporphyrin IX methyltransferase activity"/>
    <property type="evidence" value="ECO:0000314"/>
    <property type="project" value="TAIR"/>
</dbReference>
<dbReference type="GO" id="GO:0015995">
    <property type="term" value="P:chlorophyll biosynthetic process"/>
    <property type="evidence" value="ECO:0000315"/>
    <property type="project" value="CACAO"/>
</dbReference>
<dbReference type="GO" id="GO:0032259">
    <property type="term" value="P:methylation"/>
    <property type="evidence" value="ECO:0007669"/>
    <property type="project" value="UniProtKB-KW"/>
</dbReference>
<dbReference type="CDD" id="cd02440">
    <property type="entry name" value="AdoMet_MTases"/>
    <property type="match status" value="1"/>
</dbReference>
<dbReference type="FunFam" id="3.40.50.150:FF:000443">
    <property type="entry name" value="Magnesium-protoporphyrin ix methyltransferase"/>
    <property type="match status" value="1"/>
</dbReference>
<dbReference type="Gene3D" id="3.40.50.150">
    <property type="entry name" value="Vaccinia Virus protein VP39"/>
    <property type="match status" value="1"/>
</dbReference>
<dbReference type="InterPro" id="IPR010251">
    <property type="entry name" value="Mg_prot_MeTrfase"/>
</dbReference>
<dbReference type="InterPro" id="IPR010940">
    <property type="entry name" value="Mg_prot_MeTrfase_C"/>
</dbReference>
<dbReference type="InterPro" id="IPR029063">
    <property type="entry name" value="SAM-dependent_MTases_sf"/>
</dbReference>
<dbReference type="NCBIfam" id="TIGR02021">
    <property type="entry name" value="BchM-ChlM"/>
    <property type="match status" value="1"/>
</dbReference>
<dbReference type="PANTHER" id="PTHR43464">
    <property type="entry name" value="METHYLTRANSFERASE"/>
    <property type="match status" value="1"/>
</dbReference>
<dbReference type="PANTHER" id="PTHR43464:SF19">
    <property type="entry name" value="UBIQUINONE BIOSYNTHESIS O-METHYLTRANSFERASE, MITOCHONDRIAL"/>
    <property type="match status" value="1"/>
</dbReference>
<dbReference type="Pfam" id="PF07109">
    <property type="entry name" value="Mg-por_mtran_C"/>
    <property type="match status" value="1"/>
</dbReference>
<dbReference type="SUPFAM" id="SSF53335">
    <property type="entry name" value="S-adenosyl-L-methionine-dependent methyltransferases"/>
    <property type="match status" value="1"/>
</dbReference>
<dbReference type="PROSITE" id="PS51556">
    <property type="entry name" value="SAM_MT_MG_PIX"/>
    <property type="match status" value="1"/>
</dbReference>
<protein>
    <recommendedName>
        <fullName>Magnesium protoporphyrin IX methyltransferase, chloroplastic</fullName>
        <ecNumber>2.1.1.11</ecNumber>
    </recommendedName>
</protein>
<comment type="function">
    <text evidence="3 4">Converts Mg-protoporphyrin IX to Mg-protoporphyrin IX methylester using S-adenosyl-L-methionine as a cofactor. Involved in chloroplast-to-nucleus signaling by acting as a negative effector of nuclear photosynthetic gene expression.</text>
</comment>
<comment type="catalytic activity">
    <reaction evidence="2 3">
        <text>Mg-protoporphyrin IX + S-adenosyl-L-methionine = Mg-protoporphyrin IX 13-monomethyl ester + S-adenosyl-L-homocysteine</text>
        <dbReference type="Rhea" id="RHEA:17809"/>
        <dbReference type="ChEBI" id="CHEBI:57856"/>
        <dbReference type="ChEBI" id="CHEBI:59789"/>
        <dbReference type="ChEBI" id="CHEBI:60491"/>
        <dbReference type="ChEBI" id="CHEBI:60492"/>
        <dbReference type="EC" id="2.1.1.11"/>
    </reaction>
</comment>
<comment type="activity regulation">
    <text evidence="6">Regulated by the folate status via an increased concentration of S-adenosyl-homocysteine (AdoHcy), a potent inhibitor of most AdoMet-dependent methyltransferases.</text>
</comment>
<comment type="pathway">
    <text>Porphyrin-containing compound metabolism; chlorophyll biosynthesis.</text>
</comment>
<comment type="subcellular location">
    <subcellularLocation>
        <location evidence="3">Plastid</location>
        <location evidence="3">Chloroplast membrane</location>
        <topology evidence="3">Peripheral membrane protein</topology>
    </subcellularLocation>
    <subcellularLocation>
        <location evidence="3">Plastid</location>
        <location evidence="3">Chloroplast thylakoid membrane</location>
        <topology evidence="3">Peripheral membrane protein</topology>
    </subcellularLocation>
</comment>
<comment type="alternative products">
    <event type="alternative splicing"/>
    <isoform>
        <id>Q9SW18-1</id>
        <name>1</name>
        <sequence type="displayed"/>
    </isoform>
    <isoform>
        <id>Q9SW18-2</id>
        <name>2</name>
        <sequence type="described" ref="VSP_046549"/>
    </isoform>
</comment>
<comment type="induction">
    <text evidence="5 7">Up-regulated by light. Down-regulated by the herbicide R-imazethapyr.</text>
</comment>
<comment type="disruption phenotype">
    <text evidence="4">Lethal under normal growth conditions and stunted albino plants unable to produce seeds when grown in presence of sucrose.</text>
</comment>
<comment type="similarity">
    <text evidence="2">Belongs to the class I-like SAM-binding methyltransferase superfamily. Magnesium protoporphyrin O-methyltransferase family.</text>
</comment>
<sequence>MPFAPSLLSSSSSVSQFLPRFPNATRFNVTPRSRAATVVAASVTDLAGVDSTTIAVLGGGSVAALAAMVSLTDPERRRKLQAEEVGGGDKEVVREYFNSTGFERWRKIYGETDEVNRVQKDIRLGHAKTVENTMLMLTEDRSLAGVTVCDAGCGTGLLSIPLAKEGAIVSASDISAAMVAEAEMKAKAQLPSENLPKFEVNDLESLTGKYDTVVCLDVLIHYPQNKADGMIAHLASLAEKRVILSFAPKTFYYDILKRIGELFPGPSKATRAYLHSEADVERALGKVGWKISKRGLTTTQFYFSRLIEAVPM</sequence>
<accession>Q9SW18</accession>
<accession>B3H4K6</accession>
<accession>B9DF98</accession>
<feature type="transit peptide" description="Chloroplast" evidence="1">
    <location>
        <begin position="1"/>
        <end position="39"/>
    </location>
</feature>
<feature type="chain" id="PRO_0000422668" description="Magnesium protoporphyrin IX methyltransferase, chloroplastic">
    <location>
        <begin position="40"/>
        <end position="312"/>
    </location>
</feature>
<feature type="splice variant" id="VSP_046549" description="In isoform 2." evidence="8">
    <location>
        <begin position="1"/>
        <end position="67"/>
    </location>
</feature>
<feature type="sequence conflict" description="In Ref. 4; BAH19415." evidence="9" ref="4">
    <original>R</original>
    <variation>G</variation>
    <location>
        <position position="106"/>
    </location>
</feature>
<proteinExistence type="evidence at protein level"/>
<reference key="1">
    <citation type="journal article" date="1999" name="Nature">
        <title>Sequence and analysis of chromosome 4 of the plant Arabidopsis thaliana.</title>
        <authorList>
            <person name="Mayer K.F.X."/>
            <person name="Schueller C."/>
            <person name="Wambutt R."/>
            <person name="Murphy G."/>
            <person name="Volckaert G."/>
            <person name="Pohl T."/>
            <person name="Duesterhoeft A."/>
            <person name="Stiekema W."/>
            <person name="Entian K.-D."/>
            <person name="Terryn N."/>
            <person name="Harris B."/>
            <person name="Ansorge W."/>
            <person name="Brandt P."/>
            <person name="Grivell L.A."/>
            <person name="Rieger M."/>
            <person name="Weichselgartner M."/>
            <person name="de Simone V."/>
            <person name="Obermaier B."/>
            <person name="Mache R."/>
            <person name="Mueller M."/>
            <person name="Kreis M."/>
            <person name="Delseny M."/>
            <person name="Puigdomenech P."/>
            <person name="Watson M."/>
            <person name="Schmidtheini T."/>
            <person name="Reichert B."/>
            <person name="Portetelle D."/>
            <person name="Perez-Alonso M."/>
            <person name="Boutry M."/>
            <person name="Bancroft I."/>
            <person name="Vos P."/>
            <person name="Hoheisel J."/>
            <person name="Zimmermann W."/>
            <person name="Wedler H."/>
            <person name="Ridley P."/>
            <person name="Langham S.-A."/>
            <person name="McCullagh B."/>
            <person name="Bilham L."/>
            <person name="Robben J."/>
            <person name="van der Schueren J."/>
            <person name="Grymonprez B."/>
            <person name="Chuang Y.-J."/>
            <person name="Vandenbussche F."/>
            <person name="Braeken M."/>
            <person name="Weltjens I."/>
            <person name="Voet M."/>
            <person name="Bastiaens I."/>
            <person name="Aert R."/>
            <person name="Defoor E."/>
            <person name="Weitzenegger T."/>
            <person name="Bothe G."/>
            <person name="Ramsperger U."/>
            <person name="Hilbert H."/>
            <person name="Braun M."/>
            <person name="Holzer E."/>
            <person name="Brandt A."/>
            <person name="Peters S."/>
            <person name="van Staveren M."/>
            <person name="Dirkse W."/>
            <person name="Mooijman P."/>
            <person name="Klein Lankhorst R."/>
            <person name="Rose M."/>
            <person name="Hauf J."/>
            <person name="Koetter P."/>
            <person name="Berneiser S."/>
            <person name="Hempel S."/>
            <person name="Feldpausch M."/>
            <person name="Lamberth S."/>
            <person name="Van den Daele H."/>
            <person name="De Keyser A."/>
            <person name="Buysshaert C."/>
            <person name="Gielen J."/>
            <person name="Villarroel R."/>
            <person name="De Clercq R."/>
            <person name="van Montagu M."/>
            <person name="Rogers J."/>
            <person name="Cronin A."/>
            <person name="Quail M.A."/>
            <person name="Bray-Allen S."/>
            <person name="Clark L."/>
            <person name="Doggett J."/>
            <person name="Hall S."/>
            <person name="Kay M."/>
            <person name="Lennard N."/>
            <person name="McLay K."/>
            <person name="Mayes R."/>
            <person name="Pettett A."/>
            <person name="Rajandream M.A."/>
            <person name="Lyne M."/>
            <person name="Benes V."/>
            <person name="Rechmann S."/>
            <person name="Borkova D."/>
            <person name="Bloecker H."/>
            <person name="Scharfe M."/>
            <person name="Grimm M."/>
            <person name="Loehnert T.-H."/>
            <person name="Dose S."/>
            <person name="de Haan M."/>
            <person name="Maarse A.C."/>
            <person name="Schaefer M."/>
            <person name="Mueller-Auer S."/>
            <person name="Gabel C."/>
            <person name="Fuchs M."/>
            <person name="Fartmann B."/>
            <person name="Granderath K."/>
            <person name="Dauner D."/>
            <person name="Herzl A."/>
            <person name="Neumann S."/>
            <person name="Argiriou A."/>
            <person name="Vitale D."/>
            <person name="Liguori R."/>
            <person name="Piravandi E."/>
            <person name="Massenet O."/>
            <person name="Quigley F."/>
            <person name="Clabauld G."/>
            <person name="Muendlein A."/>
            <person name="Felber R."/>
            <person name="Schnabl S."/>
            <person name="Hiller R."/>
            <person name="Schmidt W."/>
            <person name="Lecharny A."/>
            <person name="Aubourg S."/>
            <person name="Chefdor F."/>
            <person name="Cooke R."/>
            <person name="Berger C."/>
            <person name="Monfort A."/>
            <person name="Casacuberta E."/>
            <person name="Gibbons T."/>
            <person name="Weber N."/>
            <person name="Vandenbol M."/>
            <person name="Bargues M."/>
            <person name="Terol J."/>
            <person name="Torres A."/>
            <person name="Perez-Perez A."/>
            <person name="Purnelle B."/>
            <person name="Bent E."/>
            <person name="Johnson S."/>
            <person name="Tacon D."/>
            <person name="Jesse T."/>
            <person name="Heijnen L."/>
            <person name="Schwarz S."/>
            <person name="Scholler P."/>
            <person name="Heber S."/>
            <person name="Francs P."/>
            <person name="Bielke C."/>
            <person name="Frishman D."/>
            <person name="Haase D."/>
            <person name="Lemcke K."/>
            <person name="Mewes H.-W."/>
            <person name="Stocker S."/>
            <person name="Zaccaria P."/>
            <person name="Bevan M."/>
            <person name="Wilson R.K."/>
            <person name="de la Bastide M."/>
            <person name="Habermann K."/>
            <person name="Parnell L."/>
            <person name="Dedhia N."/>
            <person name="Gnoj L."/>
            <person name="Schutz K."/>
            <person name="Huang E."/>
            <person name="Spiegel L."/>
            <person name="Sekhon M."/>
            <person name="Murray J."/>
            <person name="Sheet P."/>
            <person name="Cordes M."/>
            <person name="Abu-Threideh J."/>
            <person name="Stoneking T."/>
            <person name="Kalicki J."/>
            <person name="Graves T."/>
            <person name="Harmon G."/>
            <person name="Edwards J."/>
            <person name="Latreille P."/>
            <person name="Courtney L."/>
            <person name="Cloud J."/>
            <person name="Abbott A."/>
            <person name="Scott K."/>
            <person name="Johnson D."/>
            <person name="Minx P."/>
            <person name="Bentley D."/>
            <person name="Fulton B."/>
            <person name="Miller N."/>
            <person name="Greco T."/>
            <person name="Kemp K."/>
            <person name="Kramer J."/>
            <person name="Fulton L."/>
            <person name="Mardis E."/>
            <person name="Dante M."/>
            <person name="Pepin K."/>
            <person name="Hillier L.W."/>
            <person name="Nelson J."/>
            <person name="Spieth J."/>
            <person name="Ryan E."/>
            <person name="Andrews S."/>
            <person name="Geisel C."/>
            <person name="Layman D."/>
            <person name="Du H."/>
            <person name="Ali J."/>
            <person name="Berghoff A."/>
            <person name="Jones K."/>
            <person name="Drone K."/>
            <person name="Cotton M."/>
            <person name="Joshu C."/>
            <person name="Antonoiu B."/>
            <person name="Zidanic M."/>
            <person name="Strong C."/>
            <person name="Sun H."/>
            <person name="Lamar B."/>
            <person name="Yordan C."/>
            <person name="Ma P."/>
            <person name="Zhong J."/>
            <person name="Preston R."/>
            <person name="Vil D."/>
            <person name="Shekher M."/>
            <person name="Matero A."/>
            <person name="Shah R."/>
            <person name="Swaby I.K."/>
            <person name="O'Shaughnessy A."/>
            <person name="Rodriguez M."/>
            <person name="Hoffman J."/>
            <person name="Till S."/>
            <person name="Granat S."/>
            <person name="Shohdy N."/>
            <person name="Hasegawa A."/>
            <person name="Hameed A."/>
            <person name="Lodhi M."/>
            <person name="Johnson A."/>
            <person name="Chen E."/>
            <person name="Marra M.A."/>
            <person name="Martienssen R."/>
            <person name="McCombie W.R."/>
        </authorList>
    </citation>
    <scope>NUCLEOTIDE SEQUENCE [LARGE SCALE GENOMIC DNA]</scope>
    <source>
        <strain>cv. Columbia</strain>
    </source>
</reference>
<reference key="2">
    <citation type="journal article" date="2017" name="Plant J.">
        <title>Araport11: a complete reannotation of the Arabidopsis thaliana reference genome.</title>
        <authorList>
            <person name="Cheng C.Y."/>
            <person name="Krishnakumar V."/>
            <person name="Chan A.P."/>
            <person name="Thibaud-Nissen F."/>
            <person name="Schobel S."/>
            <person name="Town C.D."/>
        </authorList>
    </citation>
    <scope>GENOME REANNOTATION</scope>
    <source>
        <strain>cv. Columbia</strain>
    </source>
</reference>
<reference key="3">
    <citation type="journal article" date="2003" name="Science">
        <title>Empirical analysis of transcriptional activity in the Arabidopsis genome.</title>
        <authorList>
            <person name="Yamada K."/>
            <person name="Lim J."/>
            <person name="Dale J.M."/>
            <person name="Chen H."/>
            <person name="Shinn P."/>
            <person name="Palm C.J."/>
            <person name="Southwick A.M."/>
            <person name="Wu H.C."/>
            <person name="Kim C.J."/>
            <person name="Nguyen M."/>
            <person name="Pham P.K."/>
            <person name="Cheuk R.F."/>
            <person name="Karlin-Newmann G."/>
            <person name="Liu S.X."/>
            <person name="Lam B."/>
            <person name="Sakano H."/>
            <person name="Wu T."/>
            <person name="Yu G."/>
            <person name="Miranda M."/>
            <person name="Quach H.L."/>
            <person name="Tripp M."/>
            <person name="Chang C.H."/>
            <person name="Lee J.M."/>
            <person name="Toriumi M.J."/>
            <person name="Chan M.M."/>
            <person name="Tang C.C."/>
            <person name="Onodera C.S."/>
            <person name="Deng J.M."/>
            <person name="Akiyama K."/>
            <person name="Ansari Y."/>
            <person name="Arakawa T."/>
            <person name="Banh J."/>
            <person name="Banno F."/>
            <person name="Bowser L."/>
            <person name="Brooks S.Y."/>
            <person name="Carninci P."/>
            <person name="Chao Q."/>
            <person name="Choy N."/>
            <person name="Enju A."/>
            <person name="Goldsmith A.D."/>
            <person name="Gurjal M."/>
            <person name="Hansen N.F."/>
            <person name="Hayashizaki Y."/>
            <person name="Johnson-Hopson C."/>
            <person name="Hsuan V.W."/>
            <person name="Iida K."/>
            <person name="Karnes M."/>
            <person name="Khan S."/>
            <person name="Koesema E."/>
            <person name="Ishida J."/>
            <person name="Jiang P.X."/>
            <person name="Jones T."/>
            <person name="Kawai J."/>
            <person name="Kamiya A."/>
            <person name="Meyers C."/>
            <person name="Nakajima M."/>
            <person name="Narusaka M."/>
            <person name="Seki M."/>
            <person name="Sakurai T."/>
            <person name="Satou M."/>
            <person name="Tamse R."/>
            <person name="Vaysberg M."/>
            <person name="Wallender E.K."/>
            <person name="Wong C."/>
            <person name="Yamamura Y."/>
            <person name="Yuan S."/>
            <person name="Shinozaki K."/>
            <person name="Davis R.W."/>
            <person name="Theologis A."/>
            <person name="Ecker J.R."/>
        </authorList>
    </citation>
    <scope>NUCLEOTIDE SEQUENCE [LARGE SCALE MRNA] (ISOFORM 1)</scope>
    <source>
        <strain>cv. Columbia</strain>
    </source>
</reference>
<reference key="4">
    <citation type="journal article" date="2009" name="DNA Res.">
        <title>Analysis of multiple occurrences of alternative splicing events in Arabidopsis thaliana using novel sequenced full-length cDNAs.</title>
        <authorList>
            <person name="Iida K."/>
            <person name="Fukami-Kobayashi K."/>
            <person name="Toyoda A."/>
            <person name="Sakaki Y."/>
            <person name="Kobayashi M."/>
            <person name="Seki M."/>
            <person name="Shinozaki K."/>
        </authorList>
    </citation>
    <scope>NUCLEOTIDE SEQUENCE [LARGE SCALE MRNA] (ISOFORMS 1 AND 2)</scope>
    <source>
        <strain>cv. Columbia</strain>
    </source>
</reference>
<reference key="5">
    <citation type="journal article" date="2002" name="Eur. J. Biochem.">
        <title>The plant S-adenosyl-L-methionine:Mg-protoporphyrin IX methyltransferase is located in both envelope and thylakoid chloroplast membranes.</title>
        <authorList>
            <person name="Block M.A."/>
            <person name="Tewari A.K."/>
            <person name="Albrieux C."/>
            <person name="Marechal E."/>
            <person name="Joyard J."/>
        </authorList>
    </citation>
    <scope>FUNCTION</scope>
    <scope>CATALYTIC ACTIVITY</scope>
    <scope>SUBCELLULAR LOCATION</scope>
    <scope>TOPOLOGY</scope>
</reference>
<reference key="6">
    <citation type="journal article" date="2007" name="J. Biol. Chem.">
        <title>Knock-out of the magnesium protoporphyrin IX methyltransferase gene in Arabidopsis. Effects on chloroplast development and on chloroplast-to-nucleus signaling.</title>
        <authorList>
            <person name="Pontier D."/>
            <person name="Albrieux C."/>
            <person name="Joyard J."/>
            <person name="Lagrange T."/>
            <person name="Block M.A."/>
        </authorList>
    </citation>
    <scope>FUNCTION</scope>
    <scope>DISRUPTION PHENOTYPE</scope>
    <source>
        <strain>cv. Wassilewskija</strain>
    </source>
</reference>
<reference key="7">
    <citation type="journal article" date="2008" name="Photochem. Photobiol. Sci.">
        <title>Light signalling pathways regulating the Mg-chelatase branchpoint of chlorophyll synthesis during de-etiolation in Arabidopsis thaliana.</title>
        <authorList>
            <person name="Stephenson P.G."/>
            <person name="Terry M.J."/>
        </authorList>
    </citation>
    <scope>INDUCTION BY LIGHT</scope>
</reference>
<reference key="8">
    <citation type="journal article" date="2009" name="New Phytol.">
        <title>C1 metabolism and chlorophyll synthesis: the Mg-protoporphyrin IX methyltransferase activity is dependent on the folate status.</title>
        <authorList>
            <person name="Van Wilder V."/>
            <person name="De Brouwer V."/>
            <person name="Loizeau K."/>
            <person name="Gambonnet B."/>
            <person name="Albrieux C."/>
            <person name="Van Der Straeten D."/>
            <person name="Lambert W.E."/>
            <person name="Douce R."/>
            <person name="Block M.A."/>
            <person name="Rebeille F."/>
            <person name="Ravanel S."/>
        </authorList>
    </citation>
    <scope>ACTIVITY REGULATION</scope>
</reference>
<reference key="9">
    <citation type="journal article" date="2013" name="J. Agric. Food Chem.">
        <title>Imazethapyr enantioselectively affects chlorophyll synthesis and photosynthesis in Arabidopsis thaliana.</title>
        <authorList>
            <person name="Qian H."/>
            <person name="Han X."/>
            <person name="Zhang Q."/>
            <person name="Sun Z."/>
            <person name="Sun L."/>
            <person name="Fu Z."/>
        </authorList>
    </citation>
    <scope>INDUCTION BY IMAZETHAPYR</scope>
</reference>
<gene>
    <name type="primary">CHLM</name>
    <name type="ordered locus">At4g25080</name>
    <name type="ORF">F13M23.220</name>
</gene>
<organism>
    <name type="scientific">Arabidopsis thaliana</name>
    <name type="common">Mouse-ear cress</name>
    <dbReference type="NCBI Taxonomy" id="3702"/>
    <lineage>
        <taxon>Eukaryota</taxon>
        <taxon>Viridiplantae</taxon>
        <taxon>Streptophyta</taxon>
        <taxon>Embryophyta</taxon>
        <taxon>Tracheophyta</taxon>
        <taxon>Spermatophyta</taxon>
        <taxon>Magnoliopsida</taxon>
        <taxon>eudicotyledons</taxon>
        <taxon>Gunneridae</taxon>
        <taxon>Pentapetalae</taxon>
        <taxon>rosids</taxon>
        <taxon>malvids</taxon>
        <taxon>Brassicales</taxon>
        <taxon>Brassicaceae</taxon>
        <taxon>Camelineae</taxon>
        <taxon>Arabidopsis</taxon>
    </lineage>
</organism>